<protein>
    <recommendedName>
        <fullName evidence="1">Cytochrome c-type biogenesis protein CcmE</fullName>
    </recommendedName>
    <alternativeName>
        <fullName evidence="1">Cytochrome c maturation protein E</fullName>
    </alternativeName>
    <alternativeName>
        <fullName evidence="1">Heme chaperone CcmE</fullName>
    </alternativeName>
</protein>
<accession>Q0I078</accession>
<proteinExistence type="inferred from homology"/>
<gene>
    <name evidence="1" type="primary">ccmE</name>
    <name evidence="1" type="synonym">cycJ</name>
    <name type="ordered locus">Shewmr7_0222</name>
</gene>
<name>CCME_SHESR</name>
<sequence>MNPRRKKRLTLAIALIGGVAAIASLLLYALNSNLNLFYTPSEIVNGKADTGVKPEAGQRIRVGGMVTVGSMVRDPNSLHVQFAVHDSLGGEIMVTYDDLLPDLFREGQGIVAQGVLGEDGKLAATEVLAKHDENYMPPEVAEAMGQKHEKLDYSQQKSAAQ</sequence>
<organism>
    <name type="scientific">Shewanella sp. (strain MR-7)</name>
    <dbReference type="NCBI Taxonomy" id="60481"/>
    <lineage>
        <taxon>Bacteria</taxon>
        <taxon>Pseudomonadati</taxon>
        <taxon>Pseudomonadota</taxon>
        <taxon>Gammaproteobacteria</taxon>
        <taxon>Alteromonadales</taxon>
        <taxon>Shewanellaceae</taxon>
        <taxon>Shewanella</taxon>
    </lineage>
</organism>
<keyword id="KW-0997">Cell inner membrane</keyword>
<keyword id="KW-1003">Cell membrane</keyword>
<keyword id="KW-0201">Cytochrome c-type biogenesis</keyword>
<keyword id="KW-0349">Heme</keyword>
<keyword id="KW-0408">Iron</keyword>
<keyword id="KW-0472">Membrane</keyword>
<keyword id="KW-0479">Metal-binding</keyword>
<keyword id="KW-0735">Signal-anchor</keyword>
<keyword id="KW-0812">Transmembrane</keyword>
<keyword id="KW-1133">Transmembrane helix</keyword>
<comment type="function">
    <text evidence="1">Heme chaperone required for the biogenesis of c-type cytochromes. Transiently binds heme delivered by CcmC and transfers the heme to apo-cytochromes in a process facilitated by CcmF and CcmH.</text>
</comment>
<comment type="subcellular location">
    <subcellularLocation>
        <location evidence="1">Cell inner membrane</location>
        <topology evidence="1">Single-pass type II membrane protein</topology>
        <orientation evidence="1">Periplasmic side</orientation>
    </subcellularLocation>
</comment>
<comment type="similarity">
    <text evidence="1">Belongs to the CcmE/CycJ family.</text>
</comment>
<evidence type="ECO:0000255" key="1">
    <source>
        <dbReference type="HAMAP-Rule" id="MF_01959"/>
    </source>
</evidence>
<evidence type="ECO:0000256" key="2">
    <source>
        <dbReference type="SAM" id="MobiDB-lite"/>
    </source>
</evidence>
<reference key="1">
    <citation type="submission" date="2006-08" db="EMBL/GenBank/DDBJ databases">
        <title>Complete sequence of chromosome 1 of Shewanella sp. MR-7.</title>
        <authorList>
            <person name="Copeland A."/>
            <person name="Lucas S."/>
            <person name="Lapidus A."/>
            <person name="Barry K."/>
            <person name="Detter J.C."/>
            <person name="Glavina del Rio T."/>
            <person name="Hammon N."/>
            <person name="Israni S."/>
            <person name="Dalin E."/>
            <person name="Tice H."/>
            <person name="Pitluck S."/>
            <person name="Kiss H."/>
            <person name="Brettin T."/>
            <person name="Bruce D."/>
            <person name="Han C."/>
            <person name="Tapia R."/>
            <person name="Gilna P."/>
            <person name="Schmutz J."/>
            <person name="Larimer F."/>
            <person name="Land M."/>
            <person name="Hauser L."/>
            <person name="Kyrpides N."/>
            <person name="Mikhailova N."/>
            <person name="Nealson K."/>
            <person name="Konstantinidis K."/>
            <person name="Klappenbach J."/>
            <person name="Tiedje J."/>
            <person name="Richardson P."/>
        </authorList>
    </citation>
    <scope>NUCLEOTIDE SEQUENCE [LARGE SCALE GENOMIC DNA]</scope>
    <source>
        <strain>MR-7</strain>
    </source>
</reference>
<dbReference type="EMBL" id="CP000444">
    <property type="protein sequence ID" value="ABI41227.1"/>
    <property type="molecule type" value="Genomic_DNA"/>
</dbReference>
<dbReference type="BMRB" id="Q0I078"/>
<dbReference type="SMR" id="Q0I078"/>
<dbReference type="KEGG" id="shm:Shewmr7_0222"/>
<dbReference type="HOGENOM" id="CLU_079503_1_0_6"/>
<dbReference type="GO" id="GO:0005886">
    <property type="term" value="C:plasma membrane"/>
    <property type="evidence" value="ECO:0007669"/>
    <property type="project" value="UniProtKB-SubCell"/>
</dbReference>
<dbReference type="GO" id="GO:0020037">
    <property type="term" value="F:heme binding"/>
    <property type="evidence" value="ECO:0007669"/>
    <property type="project" value="InterPro"/>
</dbReference>
<dbReference type="GO" id="GO:0046872">
    <property type="term" value="F:metal ion binding"/>
    <property type="evidence" value="ECO:0007669"/>
    <property type="project" value="UniProtKB-KW"/>
</dbReference>
<dbReference type="GO" id="GO:0017004">
    <property type="term" value="P:cytochrome complex assembly"/>
    <property type="evidence" value="ECO:0007669"/>
    <property type="project" value="UniProtKB-KW"/>
</dbReference>
<dbReference type="FunFam" id="2.40.50.140:FF:000104">
    <property type="entry name" value="Cytochrome c-type biogenesis protein CcmE"/>
    <property type="match status" value="1"/>
</dbReference>
<dbReference type="Gene3D" id="2.40.50.140">
    <property type="entry name" value="Nucleic acid-binding proteins"/>
    <property type="match status" value="1"/>
</dbReference>
<dbReference type="HAMAP" id="MF_01959">
    <property type="entry name" value="CcmE"/>
    <property type="match status" value="1"/>
</dbReference>
<dbReference type="InterPro" id="IPR004329">
    <property type="entry name" value="CcmE"/>
</dbReference>
<dbReference type="InterPro" id="IPR036127">
    <property type="entry name" value="CcmE-like_sf"/>
</dbReference>
<dbReference type="InterPro" id="IPR012340">
    <property type="entry name" value="NA-bd_OB-fold"/>
</dbReference>
<dbReference type="NCBIfam" id="NF009638">
    <property type="entry name" value="PRK13165.1"/>
    <property type="match status" value="1"/>
</dbReference>
<dbReference type="NCBIfam" id="NF009729">
    <property type="entry name" value="PRK13254.1-3"/>
    <property type="match status" value="1"/>
</dbReference>
<dbReference type="PANTHER" id="PTHR34128">
    <property type="entry name" value="CYTOCHROME C-TYPE BIOGENESIS PROTEIN CCME HOMOLOG, MITOCHONDRIAL"/>
    <property type="match status" value="1"/>
</dbReference>
<dbReference type="PANTHER" id="PTHR34128:SF2">
    <property type="entry name" value="CYTOCHROME C-TYPE BIOGENESIS PROTEIN CCME HOMOLOG, MITOCHONDRIAL"/>
    <property type="match status" value="1"/>
</dbReference>
<dbReference type="Pfam" id="PF03100">
    <property type="entry name" value="CcmE"/>
    <property type="match status" value="1"/>
</dbReference>
<dbReference type="SUPFAM" id="SSF82093">
    <property type="entry name" value="Heme chaperone CcmE"/>
    <property type="match status" value="1"/>
</dbReference>
<feature type="chain" id="PRO_1000070860" description="Cytochrome c-type biogenesis protein CcmE">
    <location>
        <begin position="1"/>
        <end position="161"/>
    </location>
</feature>
<feature type="topological domain" description="Cytoplasmic" evidence="1">
    <location>
        <begin position="1"/>
        <end position="8"/>
    </location>
</feature>
<feature type="transmembrane region" description="Helical; Signal-anchor for type II membrane protein" evidence="1">
    <location>
        <begin position="9"/>
        <end position="29"/>
    </location>
</feature>
<feature type="topological domain" description="Periplasmic" evidence="1">
    <location>
        <begin position="30"/>
        <end position="161"/>
    </location>
</feature>
<feature type="region of interest" description="Disordered" evidence="2">
    <location>
        <begin position="138"/>
        <end position="161"/>
    </location>
</feature>
<feature type="binding site" description="covalent" evidence="1">
    <location>
        <position position="131"/>
    </location>
    <ligand>
        <name>heme</name>
        <dbReference type="ChEBI" id="CHEBI:30413"/>
    </ligand>
</feature>
<feature type="binding site" description="axial binding residue" evidence="1">
    <location>
        <position position="135"/>
    </location>
    <ligand>
        <name>heme</name>
        <dbReference type="ChEBI" id="CHEBI:30413"/>
    </ligand>
    <ligandPart>
        <name>Fe</name>
        <dbReference type="ChEBI" id="CHEBI:18248"/>
    </ligandPart>
</feature>